<dbReference type="EMBL" id="X71380">
    <property type="protein sequence ID" value="CAA50502.1"/>
    <property type="molecule type" value="Genomic_DNA"/>
</dbReference>
<dbReference type="EMBL" id="Y09004">
    <property type="protein sequence ID" value="CAA70209.1"/>
    <property type="molecule type" value="Genomic_DNA"/>
</dbReference>
<dbReference type="EMBL" id="AY092841">
    <property type="protein sequence ID" value="AAM11432.1"/>
    <property type="molecule type" value="mRNA"/>
</dbReference>
<dbReference type="PIR" id="S32696">
    <property type="entry name" value="S32696"/>
</dbReference>
<dbReference type="RefSeq" id="NP_001008277.1">
    <property type="nucleotide sequence ID" value="NM_001008276.1"/>
</dbReference>
<dbReference type="RefSeq" id="XP_005632092.1">
    <property type="nucleotide sequence ID" value="XM_005632035.2"/>
</dbReference>
<dbReference type="PDB" id="4UE5">
    <property type="method" value="EM"/>
    <property type="resolution" value="9.00 A"/>
    <property type="chains" value="S=50-67"/>
</dbReference>
<dbReference type="PDBsum" id="4UE5"/>
<dbReference type="SMR" id="P32308"/>
<dbReference type="FunCoup" id="P32308">
    <property type="interactions" value="75"/>
</dbReference>
<dbReference type="GlyCosmos" id="P32308">
    <property type="glycosylation" value="2 sites, No reported glycans"/>
</dbReference>
<dbReference type="PaxDb" id="9612-ENSCAFP00000006912"/>
<dbReference type="GeneID" id="493763"/>
<dbReference type="KEGG" id="cfa:493763"/>
<dbReference type="CTD" id="6010"/>
<dbReference type="eggNOG" id="KOG3656">
    <property type="taxonomic scope" value="Eukaryota"/>
</dbReference>
<dbReference type="InParanoid" id="P32308"/>
<dbReference type="OrthoDB" id="5962323at2759"/>
<dbReference type="TreeFam" id="TF324998"/>
<dbReference type="EvolutionaryTrace" id="P32308"/>
<dbReference type="Proteomes" id="UP000002254">
    <property type="component" value="Unplaced"/>
</dbReference>
<dbReference type="Proteomes" id="UP000694429">
    <property type="component" value="Unplaced"/>
</dbReference>
<dbReference type="Proteomes" id="UP000694542">
    <property type="component" value="Unplaced"/>
</dbReference>
<dbReference type="Proteomes" id="UP000805418">
    <property type="component" value="Unplaced"/>
</dbReference>
<dbReference type="GO" id="GO:0016020">
    <property type="term" value="C:membrane"/>
    <property type="evidence" value="ECO:0000250"/>
    <property type="project" value="UniProtKB"/>
</dbReference>
<dbReference type="GO" id="GO:0097381">
    <property type="term" value="C:photoreceptor disc membrane"/>
    <property type="evidence" value="ECO:0000250"/>
    <property type="project" value="UniProtKB"/>
</dbReference>
<dbReference type="GO" id="GO:0060342">
    <property type="term" value="C:photoreceptor inner segment membrane"/>
    <property type="evidence" value="ECO:0000250"/>
    <property type="project" value="UniProtKB"/>
</dbReference>
<dbReference type="GO" id="GO:0001750">
    <property type="term" value="C:photoreceptor outer segment"/>
    <property type="evidence" value="ECO:0000318"/>
    <property type="project" value="GO_Central"/>
</dbReference>
<dbReference type="GO" id="GO:0042622">
    <property type="term" value="C:photoreceptor outer segment membrane"/>
    <property type="evidence" value="ECO:0000250"/>
    <property type="project" value="UniProtKB"/>
</dbReference>
<dbReference type="GO" id="GO:0005886">
    <property type="term" value="C:plasma membrane"/>
    <property type="evidence" value="ECO:0000250"/>
    <property type="project" value="UniProtKB"/>
</dbReference>
<dbReference type="GO" id="GO:0005502">
    <property type="term" value="F:11-cis retinal binding"/>
    <property type="evidence" value="ECO:0000250"/>
    <property type="project" value="UniProtKB"/>
</dbReference>
<dbReference type="GO" id="GO:0008020">
    <property type="term" value="F:G protein-coupled photoreceptor activity"/>
    <property type="evidence" value="ECO:0000250"/>
    <property type="project" value="UniProtKB"/>
</dbReference>
<dbReference type="GO" id="GO:0046872">
    <property type="term" value="F:metal ion binding"/>
    <property type="evidence" value="ECO:0007669"/>
    <property type="project" value="UniProtKB-KW"/>
</dbReference>
<dbReference type="GO" id="GO:0016038">
    <property type="term" value="P:absorption of visible light"/>
    <property type="evidence" value="ECO:0000250"/>
    <property type="project" value="AgBase"/>
</dbReference>
<dbReference type="GO" id="GO:0071482">
    <property type="term" value="P:cellular response to light stimulus"/>
    <property type="evidence" value="ECO:0000318"/>
    <property type="project" value="GO_Central"/>
</dbReference>
<dbReference type="GO" id="GO:0016056">
    <property type="term" value="P:G protein-coupled opsin signaling pathway"/>
    <property type="evidence" value="ECO:0000250"/>
    <property type="project" value="UniProtKB"/>
</dbReference>
<dbReference type="GO" id="GO:0007186">
    <property type="term" value="P:G protein-coupled receptor signaling pathway"/>
    <property type="evidence" value="ECO:0000318"/>
    <property type="project" value="GO_Central"/>
</dbReference>
<dbReference type="GO" id="GO:0007602">
    <property type="term" value="P:phototransduction"/>
    <property type="evidence" value="ECO:0000318"/>
    <property type="project" value="GO_Central"/>
</dbReference>
<dbReference type="GO" id="GO:0007601">
    <property type="term" value="P:visual perception"/>
    <property type="evidence" value="ECO:0007669"/>
    <property type="project" value="UniProtKB-KW"/>
</dbReference>
<dbReference type="CDD" id="cd15080">
    <property type="entry name" value="7tmA_MWS_opsin"/>
    <property type="match status" value="1"/>
</dbReference>
<dbReference type="FunFam" id="1.20.1070.10:FF:000018">
    <property type="entry name" value="Rhodopsin"/>
    <property type="match status" value="1"/>
</dbReference>
<dbReference type="Gene3D" id="1.20.1070.10">
    <property type="entry name" value="Rhodopsin 7-helix transmembrane proteins"/>
    <property type="match status" value="1"/>
</dbReference>
<dbReference type="InterPro" id="IPR050125">
    <property type="entry name" value="GPCR_opsins"/>
</dbReference>
<dbReference type="InterPro" id="IPR000276">
    <property type="entry name" value="GPCR_Rhodpsn"/>
</dbReference>
<dbReference type="InterPro" id="IPR017452">
    <property type="entry name" value="GPCR_Rhodpsn_7TM"/>
</dbReference>
<dbReference type="InterPro" id="IPR001760">
    <property type="entry name" value="Opsin"/>
</dbReference>
<dbReference type="InterPro" id="IPR027430">
    <property type="entry name" value="Retinal_BS"/>
</dbReference>
<dbReference type="InterPro" id="IPR000732">
    <property type="entry name" value="Rhodopsin"/>
</dbReference>
<dbReference type="InterPro" id="IPR019477">
    <property type="entry name" value="Rhodopsin_N"/>
</dbReference>
<dbReference type="PANTHER" id="PTHR24240">
    <property type="entry name" value="OPSIN"/>
    <property type="match status" value="1"/>
</dbReference>
<dbReference type="Pfam" id="PF00001">
    <property type="entry name" value="7tm_1"/>
    <property type="match status" value="1"/>
</dbReference>
<dbReference type="Pfam" id="PF10413">
    <property type="entry name" value="Rhodopsin_N"/>
    <property type="match status" value="1"/>
</dbReference>
<dbReference type="PRINTS" id="PR00237">
    <property type="entry name" value="GPCRRHODOPSN"/>
</dbReference>
<dbReference type="PRINTS" id="PR00238">
    <property type="entry name" value="OPSIN"/>
</dbReference>
<dbReference type="PRINTS" id="PR00579">
    <property type="entry name" value="RHODOPSIN"/>
</dbReference>
<dbReference type="SUPFAM" id="SSF81321">
    <property type="entry name" value="Family A G protein-coupled receptor-like"/>
    <property type="match status" value="1"/>
</dbReference>
<dbReference type="PROSITE" id="PS00237">
    <property type="entry name" value="G_PROTEIN_RECEP_F1_1"/>
    <property type="match status" value="1"/>
</dbReference>
<dbReference type="PROSITE" id="PS50262">
    <property type="entry name" value="G_PROTEIN_RECEP_F1_2"/>
    <property type="match status" value="1"/>
</dbReference>
<dbReference type="PROSITE" id="PS00238">
    <property type="entry name" value="OPSIN"/>
    <property type="match status" value="1"/>
</dbReference>
<accession>P32308</accession>
<accession>P79146</accession>
<accession>Q8MK70</accession>
<reference key="1">
    <citation type="journal article" date="1994" name="Gene">
        <title>Nucleotide sequence of the canine rod-opsin-encoding gene.</title>
        <authorList>
            <person name="Petersen-Jones S.M."/>
            <person name="Sohal A.K."/>
            <person name="Sargan D.R."/>
        </authorList>
    </citation>
    <scope>NUCLEOTIDE SEQUENCE [GENOMIC DNA]</scope>
    <source>
        <tissue>Retina</tissue>
    </source>
</reference>
<reference key="2">
    <citation type="journal article" date="1997" name="DNA Seq.">
        <title>The introns of the canine rod opsin gene show higher sequence homology to the human than to the rodent introns.</title>
        <authorList>
            <person name="Kylma T.J."/>
            <person name="Roos C."/>
            <person name="Paulin L."/>
            <person name="Kommonen B."/>
        </authorList>
    </citation>
    <scope>NUCLEOTIDE SEQUENCE [GENOMIC DNA]</scope>
    <source>
        <strain>Labrador retriever</strain>
    </source>
</reference>
<reference key="3">
    <citation type="journal article" date="2002" name="Proc. Natl. Acad. Sci. U.S.A.">
        <title>Naturally occurring rhodopsin mutation in the dog causes retinal dysfunction and degeneration mimicking human dominant retinitis pigmentosa.</title>
        <authorList>
            <person name="Kijas J.W."/>
            <person name="Cideciyan A.V."/>
            <person name="Aleman T.S."/>
            <person name="Pianta M.J."/>
            <person name="Pearce-Kelling S.E."/>
            <person name="Miller B.J."/>
            <person name="Jacobson S.G."/>
            <person name="Aguirre G.D."/>
            <person name="Acland G.M."/>
        </authorList>
    </citation>
    <scope>NUCLEOTIDE SEQUENCE [MRNA]</scope>
    <scope>FUNCTION</scope>
    <scope>VARIANT ADRP ARG-4</scope>
    <source>
        <strain>English mastiff</strain>
    </source>
</reference>
<proteinExistence type="evidence at protein level"/>
<organism>
    <name type="scientific">Canis lupus familiaris</name>
    <name type="common">Dog</name>
    <name type="synonym">Canis familiaris</name>
    <dbReference type="NCBI Taxonomy" id="9615"/>
    <lineage>
        <taxon>Eukaryota</taxon>
        <taxon>Metazoa</taxon>
        <taxon>Chordata</taxon>
        <taxon>Craniata</taxon>
        <taxon>Vertebrata</taxon>
        <taxon>Euteleostomi</taxon>
        <taxon>Mammalia</taxon>
        <taxon>Eutheria</taxon>
        <taxon>Laurasiatheria</taxon>
        <taxon>Carnivora</taxon>
        <taxon>Caniformia</taxon>
        <taxon>Canidae</taxon>
        <taxon>Canis</taxon>
    </lineage>
</organism>
<keyword id="KW-0002">3D-structure</keyword>
<keyword id="KW-0007">Acetylation</keyword>
<keyword id="KW-0966">Cell projection</keyword>
<keyword id="KW-0157">Chromophore</keyword>
<keyword id="KW-0225">Disease variant</keyword>
<keyword id="KW-1015">Disulfide bond</keyword>
<keyword id="KW-0297">G-protein coupled receptor</keyword>
<keyword id="KW-0325">Glycoprotein</keyword>
<keyword id="KW-0449">Lipoprotein</keyword>
<keyword id="KW-0472">Membrane</keyword>
<keyword id="KW-0479">Metal-binding</keyword>
<keyword id="KW-0564">Palmitate</keyword>
<keyword id="KW-0597">Phosphoprotein</keyword>
<keyword id="KW-0600">Photoreceptor protein</keyword>
<keyword id="KW-0675">Receptor</keyword>
<keyword id="KW-1185">Reference proteome</keyword>
<keyword id="KW-0681">Retinal protein</keyword>
<keyword id="KW-0716">Sensory transduction</keyword>
<keyword id="KW-0807">Transducer</keyword>
<keyword id="KW-0812">Transmembrane</keyword>
<keyword id="KW-1133">Transmembrane helix</keyword>
<keyword id="KW-0844">Vision</keyword>
<keyword id="KW-0862">Zinc</keyword>
<sequence length="348" mass="38963">MNGTEGPNFYVPFSNKTGVVRSPFEYPQYYLAEPWQFSMLAAYMFLLIVLGFPINFLTLYVTVQHKKLRTPLNYILLNLAVADLFMVFGGFTTTLYTSLHGYFVFGPTGCNVEGFFATLGGEIALWSLVVLAIERYVVVCKPMSNFRFGENHAIMGVAFTWVMALACAAPPLAGWSRYIPEGMQCSCGIDYYTLKPEINNESFVIYMFVVHFAIPMIVIFFCYGQLVFTVKEAAAQQQESATTQKAEKEVTRMVIIMVIAFLICWVPYASVAFYIFTHQGSDFGPIFMTLPAFFAKSSSIYNPVIYIMMNKQFRNCMITTLCCGKNPLGDDEASASASKTETSQVAPA</sequence>
<gene>
    <name type="primary">RHO</name>
</gene>
<comment type="function">
    <text evidence="1 3 6">Photoreceptor required for image-forming vision at low light intensity. Required for photoreceptor cell viability after birth (PubMed:11972042). Light-induced isomerization of 11-cis to all-trans retinal triggers a conformational change that activates signaling via G-proteins. Subsequent receptor phosphorylation mediates displacement of the bound G-protein alpha subunit by the arrestin SAG and terminates signaling (By similarity).</text>
</comment>
<comment type="subunit">
    <text evidence="1 3">Homodimer (By similarity). May form a complex composed of RHO, GRK1 and RCVRN in a Ca(2+)-dependent manner; RCVRN prevents the interaction between GRK1 and RHO (By similarity). Interacts with GRK1 (By similarity). Interacts (phosphorylated form) with SAG. Interacts with GNAT1. Interacts with GNAT3. SAG and G-proteins compete for a common binding site (By similarity). Interacts with PRCD; the interaction promotes PRCD stability. Forms a complex with ASAP1 and ARF4. Forms a complex with ASAP1, RAB11A, Rabin8/RAB3IP, ARF4 and RAB11FIP3; the complex regulates Golgi-to-cilia rhodopsin/RHO transport in photoreceptors (By similarity).</text>
</comment>
<comment type="subcellular location">
    <subcellularLocation>
        <location evidence="1">Membrane</location>
        <topology evidence="1">Multi-pass membrane protein</topology>
    </subcellularLocation>
    <subcellularLocation>
        <location evidence="1">Cell projection</location>
        <location evidence="1">Cilium</location>
        <location evidence="1">Photoreceptor outer segment</location>
    </subcellularLocation>
    <text evidence="3">Synthesized in the inner segment (IS) of rod photoreceptor cells before vectorial transport to disk membranes in the rod outer segment (OS) photosensory cilia.</text>
</comment>
<comment type="PTM">
    <text evidence="1">Phosphorylated on some or all of the serine and threonine residues present in the C-terminal region.</text>
</comment>
<comment type="PTM">
    <text evidence="1">Contains one covalently linked retinal chromophore. Upon light absorption, the covalently bound 11-cis-retinal is converted to all-trans-retinal. After hydrolysis of the Schiff base and release of the covalently bound all-trans-retinal, active rhodopsin is regenerated by binding of a fresh molecule of 11-cis-retinal.</text>
</comment>
<comment type="disease">
    <text evidence="6">Defects in RHO are a cause of autosomal dominant retinitis pigmentosa (ADRP). The phenotypic features shared by dog and man include a dramatically slowed time course of recovery of rod photoreceptor function after light exposure and a distinctive topographic pattern to the retinal degeneration. This disease was identified in the English mastiff breed.</text>
</comment>
<comment type="similarity">
    <text evidence="5">Belongs to the G-protein coupled receptor 1 family. Opsin subfamily.</text>
</comment>
<name>OPSD_CANLF</name>
<feature type="chain" id="PRO_0000197657" description="Rhodopsin">
    <location>
        <begin position="1"/>
        <end position="348"/>
    </location>
</feature>
<feature type="topological domain" description="Extracellular" evidence="7">
    <location>
        <begin position="1"/>
        <end position="36"/>
    </location>
</feature>
<feature type="transmembrane region" description="Helical; Name=1" evidence="1">
    <location>
        <begin position="37"/>
        <end position="61"/>
    </location>
</feature>
<feature type="topological domain" description="Cytoplasmic" evidence="7">
    <location>
        <begin position="62"/>
        <end position="73"/>
    </location>
</feature>
<feature type="transmembrane region" description="Helical; Name=2" evidence="1">
    <location>
        <begin position="74"/>
        <end position="96"/>
    </location>
</feature>
<feature type="topological domain" description="Extracellular" evidence="7">
    <location>
        <begin position="97"/>
        <end position="110"/>
    </location>
</feature>
<feature type="transmembrane region" description="Helical; Name=3" evidence="1">
    <location>
        <begin position="111"/>
        <end position="133"/>
    </location>
</feature>
<feature type="topological domain" description="Cytoplasmic" evidence="7">
    <location>
        <begin position="134"/>
        <end position="152"/>
    </location>
</feature>
<feature type="transmembrane region" description="Helical; Name=4" evidence="1">
    <location>
        <begin position="153"/>
        <end position="173"/>
    </location>
</feature>
<feature type="topological domain" description="Extracellular" evidence="7">
    <location>
        <begin position="174"/>
        <end position="202"/>
    </location>
</feature>
<feature type="transmembrane region" description="Helical; Name=5" evidence="1">
    <location>
        <begin position="203"/>
        <end position="224"/>
    </location>
</feature>
<feature type="topological domain" description="Cytoplasmic" evidence="7">
    <location>
        <begin position="225"/>
        <end position="252"/>
    </location>
</feature>
<feature type="transmembrane region" description="Helical; Name=6" evidence="1">
    <location>
        <begin position="253"/>
        <end position="274"/>
    </location>
</feature>
<feature type="topological domain" description="Extracellular" evidence="7">
    <location>
        <begin position="275"/>
        <end position="286"/>
    </location>
</feature>
<feature type="transmembrane region" description="Helical; Name=7" evidence="1">
    <location>
        <begin position="287"/>
        <end position="308"/>
    </location>
</feature>
<feature type="topological domain" description="Cytoplasmic" evidence="7">
    <location>
        <begin position="309"/>
        <end position="348"/>
    </location>
</feature>
<feature type="region of interest" description="Interaction with SAG" evidence="1">
    <location>
        <begin position="330"/>
        <end position="348"/>
    </location>
</feature>
<feature type="short sequence motif" description="'Ionic lock' involved in activated form stabilization" evidence="1">
    <location>
        <begin position="134"/>
        <end position="136"/>
    </location>
</feature>
<feature type="binding site" evidence="1">
    <location>
        <position position="201"/>
    </location>
    <ligand>
        <name>Zn(2+)</name>
        <dbReference type="ChEBI" id="CHEBI:29105"/>
    </ligand>
</feature>
<feature type="binding site" evidence="1">
    <location>
        <position position="279"/>
    </location>
    <ligand>
        <name>Zn(2+)</name>
        <dbReference type="ChEBI" id="CHEBI:29105"/>
    </ligand>
</feature>
<feature type="site" description="Plays an important role in the conformation switch to the active conformation" evidence="1">
    <location>
        <position position="113"/>
    </location>
</feature>
<feature type="modified residue" description="N-acetylmethionine" evidence="1">
    <location>
        <position position="1"/>
    </location>
</feature>
<feature type="modified residue" description="N6-(retinylidene)lysine" evidence="1">
    <location>
        <position position="296"/>
    </location>
</feature>
<feature type="modified residue" description="Phosphoserine" evidence="2">
    <location>
        <position position="334"/>
    </location>
</feature>
<feature type="modified residue" description="Phosphoserine" evidence="2">
    <location>
        <position position="338"/>
    </location>
</feature>
<feature type="modified residue" description="Phosphothreonine" evidence="1">
    <location>
        <position position="340"/>
    </location>
</feature>
<feature type="modified residue" description="Phosphothreonine" evidence="1">
    <location>
        <position position="342"/>
    </location>
</feature>
<feature type="modified residue" description="Phosphoserine" evidence="1">
    <location>
        <position position="343"/>
    </location>
</feature>
<feature type="lipid moiety-binding region" description="S-palmitoyl cysteine" evidence="1">
    <location>
        <position position="322"/>
    </location>
</feature>
<feature type="lipid moiety-binding region" description="S-palmitoyl cysteine" evidence="1">
    <location>
        <position position="323"/>
    </location>
</feature>
<feature type="glycosylation site" description="N-linked (GlcNAc...) asparagine" evidence="4">
    <location>
        <position position="2"/>
    </location>
</feature>
<feature type="glycosylation site" description="N-linked (GlcNAc...) asparagine" evidence="4">
    <location>
        <position position="15"/>
    </location>
</feature>
<feature type="disulfide bond" evidence="5">
    <location>
        <begin position="110"/>
        <end position="187"/>
    </location>
</feature>
<feature type="sequence variant" description="In ADRP." evidence="6">
    <original>T</original>
    <variation>R</variation>
    <location>
        <position position="4"/>
    </location>
</feature>
<feature type="sequence conflict" description="In Ref. 2; CAA70209." evidence="7" ref="2">
    <original>S</original>
    <variation>SSLLSHSPLVL</variation>
    <location>
        <position position="176"/>
    </location>
</feature>
<protein>
    <recommendedName>
        <fullName>Rhodopsin</fullName>
    </recommendedName>
</protein>
<evidence type="ECO:0000250" key="1">
    <source>
        <dbReference type="UniProtKB" id="P02699"/>
    </source>
</evidence>
<evidence type="ECO:0000250" key="2">
    <source>
        <dbReference type="UniProtKB" id="P02700"/>
    </source>
</evidence>
<evidence type="ECO:0000250" key="3">
    <source>
        <dbReference type="UniProtKB" id="P08100"/>
    </source>
</evidence>
<evidence type="ECO:0000255" key="4"/>
<evidence type="ECO:0000255" key="5">
    <source>
        <dbReference type="PROSITE-ProRule" id="PRU00521"/>
    </source>
</evidence>
<evidence type="ECO:0000269" key="6">
    <source>
    </source>
</evidence>
<evidence type="ECO:0000305" key="7"/>